<comment type="catalytic activity">
    <reaction evidence="1">
        <text>tRNA(Arg) + L-arginine + ATP = L-arginyl-tRNA(Arg) + AMP + diphosphate</text>
        <dbReference type="Rhea" id="RHEA:20301"/>
        <dbReference type="Rhea" id="RHEA-COMP:9658"/>
        <dbReference type="Rhea" id="RHEA-COMP:9673"/>
        <dbReference type="ChEBI" id="CHEBI:30616"/>
        <dbReference type="ChEBI" id="CHEBI:32682"/>
        <dbReference type="ChEBI" id="CHEBI:33019"/>
        <dbReference type="ChEBI" id="CHEBI:78442"/>
        <dbReference type="ChEBI" id="CHEBI:78513"/>
        <dbReference type="ChEBI" id="CHEBI:456215"/>
        <dbReference type="EC" id="6.1.1.19"/>
    </reaction>
</comment>
<comment type="subunit">
    <text evidence="1">Monomer.</text>
</comment>
<comment type="subcellular location">
    <subcellularLocation>
        <location evidence="1">Cytoplasm</location>
    </subcellularLocation>
</comment>
<comment type="similarity">
    <text evidence="1">Belongs to the class-I aminoacyl-tRNA synthetase family.</text>
</comment>
<dbReference type="EC" id="6.1.1.19" evidence="1"/>
<dbReference type="EMBL" id="CR936503">
    <property type="protein sequence ID" value="CAI55724.1"/>
    <property type="molecule type" value="Genomic_DNA"/>
</dbReference>
<dbReference type="RefSeq" id="WP_011375114.1">
    <property type="nucleotide sequence ID" value="NC_007576.1"/>
</dbReference>
<dbReference type="SMR" id="Q38VQ9"/>
<dbReference type="STRING" id="314315.LCA_1421"/>
<dbReference type="KEGG" id="lsa:LCA_1421"/>
<dbReference type="eggNOG" id="COG0018">
    <property type="taxonomic scope" value="Bacteria"/>
</dbReference>
<dbReference type="HOGENOM" id="CLU_006406_6_1_9"/>
<dbReference type="OrthoDB" id="9805987at2"/>
<dbReference type="Proteomes" id="UP000002707">
    <property type="component" value="Chromosome"/>
</dbReference>
<dbReference type="GO" id="GO:0005737">
    <property type="term" value="C:cytoplasm"/>
    <property type="evidence" value="ECO:0007669"/>
    <property type="project" value="UniProtKB-SubCell"/>
</dbReference>
<dbReference type="GO" id="GO:0004814">
    <property type="term" value="F:arginine-tRNA ligase activity"/>
    <property type="evidence" value="ECO:0007669"/>
    <property type="project" value="UniProtKB-UniRule"/>
</dbReference>
<dbReference type="GO" id="GO:0005524">
    <property type="term" value="F:ATP binding"/>
    <property type="evidence" value="ECO:0007669"/>
    <property type="project" value="UniProtKB-UniRule"/>
</dbReference>
<dbReference type="GO" id="GO:0006420">
    <property type="term" value="P:arginyl-tRNA aminoacylation"/>
    <property type="evidence" value="ECO:0007669"/>
    <property type="project" value="UniProtKB-UniRule"/>
</dbReference>
<dbReference type="CDD" id="cd07956">
    <property type="entry name" value="Anticodon_Ia_Arg"/>
    <property type="match status" value="1"/>
</dbReference>
<dbReference type="CDD" id="cd00671">
    <property type="entry name" value="ArgRS_core"/>
    <property type="match status" value="1"/>
</dbReference>
<dbReference type="FunFam" id="3.40.50.620:FF:000116">
    <property type="entry name" value="Arginine--tRNA ligase"/>
    <property type="match status" value="1"/>
</dbReference>
<dbReference type="FunFam" id="1.10.730.10:FF:000006">
    <property type="entry name" value="Arginyl-tRNA synthetase 2, mitochondrial"/>
    <property type="match status" value="1"/>
</dbReference>
<dbReference type="Gene3D" id="3.30.1360.70">
    <property type="entry name" value="Arginyl tRNA synthetase N-terminal domain"/>
    <property type="match status" value="1"/>
</dbReference>
<dbReference type="Gene3D" id="3.40.50.620">
    <property type="entry name" value="HUPs"/>
    <property type="match status" value="1"/>
</dbReference>
<dbReference type="Gene3D" id="1.10.730.10">
    <property type="entry name" value="Isoleucyl-tRNA Synthetase, Domain 1"/>
    <property type="match status" value="1"/>
</dbReference>
<dbReference type="HAMAP" id="MF_00123">
    <property type="entry name" value="Arg_tRNA_synth"/>
    <property type="match status" value="1"/>
</dbReference>
<dbReference type="InterPro" id="IPR001278">
    <property type="entry name" value="Arg-tRNA-ligase"/>
</dbReference>
<dbReference type="InterPro" id="IPR005148">
    <property type="entry name" value="Arg-tRNA-synth_N"/>
</dbReference>
<dbReference type="InterPro" id="IPR036695">
    <property type="entry name" value="Arg-tRNA-synth_N_sf"/>
</dbReference>
<dbReference type="InterPro" id="IPR035684">
    <property type="entry name" value="ArgRS_core"/>
</dbReference>
<dbReference type="InterPro" id="IPR008909">
    <property type="entry name" value="DALR_anticod-bd"/>
</dbReference>
<dbReference type="InterPro" id="IPR014729">
    <property type="entry name" value="Rossmann-like_a/b/a_fold"/>
</dbReference>
<dbReference type="InterPro" id="IPR009080">
    <property type="entry name" value="tRNAsynth_Ia_anticodon-bd"/>
</dbReference>
<dbReference type="NCBIfam" id="TIGR00456">
    <property type="entry name" value="argS"/>
    <property type="match status" value="1"/>
</dbReference>
<dbReference type="PANTHER" id="PTHR11956:SF5">
    <property type="entry name" value="ARGININE--TRNA LIGASE, CYTOPLASMIC"/>
    <property type="match status" value="1"/>
</dbReference>
<dbReference type="PANTHER" id="PTHR11956">
    <property type="entry name" value="ARGINYL-TRNA SYNTHETASE"/>
    <property type="match status" value="1"/>
</dbReference>
<dbReference type="Pfam" id="PF03485">
    <property type="entry name" value="Arg_tRNA_synt_N"/>
    <property type="match status" value="1"/>
</dbReference>
<dbReference type="Pfam" id="PF05746">
    <property type="entry name" value="DALR_1"/>
    <property type="match status" value="1"/>
</dbReference>
<dbReference type="Pfam" id="PF00750">
    <property type="entry name" value="tRNA-synt_1d"/>
    <property type="match status" value="1"/>
</dbReference>
<dbReference type="PRINTS" id="PR01038">
    <property type="entry name" value="TRNASYNTHARG"/>
</dbReference>
<dbReference type="SMART" id="SM01016">
    <property type="entry name" value="Arg_tRNA_synt_N"/>
    <property type="match status" value="1"/>
</dbReference>
<dbReference type="SMART" id="SM00836">
    <property type="entry name" value="DALR_1"/>
    <property type="match status" value="1"/>
</dbReference>
<dbReference type="SUPFAM" id="SSF47323">
    <property type="entry name" value="Anticodon-binding domain of a subclass of class I aminoacyl-tRNA synthetases"/>
    <property type="match status" value="1"/>
</dbReference>
<dbReference type="SUPFAM" id="SSF55190">
    <property type="entry name" value="Arginyl-tRNA synthetase (ArgRS), N-terminal 'additional' domain"/>
    <property type="match status" value="1"/>
</dbReference>
<dbReference type="SUPFAM" id="SSF52374">
    <property type="entry name" value="Nucleotidylyl transferase"/>
    <property type="match status" value="1"/>
</dbReference>
<protein>
    <recommendedName>
        <fullName evidence="1">Arginine--tRNA ligase</fullName>
        <ecNumber evidence="1">6.1.1.19</ecNumber>
    </recommendedName>
    <alternativeName>
        <fullName evidence="1">Arginyl-tRNA synthetase</fullName>
        <shortName evidence="1">ArgRS</shortName>
    </alternativeName>
</protein>
<organism>
    <name type="scientific">Latilactobacillus sakei subsp. sakei (strain 23K)</name>
    <name type="common">Lactobacillus sakei subsp. sakei</name>
    <dbReference type="NCBI Taxonomy" id="314315"/>
    <lineage>
        <taxon>Bacteria</taxon>
        <taxon>Bacillati</taxon>
        <taxon>Bacillota</taxon>
        <taxon>Bacilli</taxon>
        <taxon>Lactobacillales</taxon>
        <taxon>Lactobacillaceae</taxon>
        <taxon>Latilactobacillus</taxon>
    </lineage>
</organism>
<evidence type="ECO:0000255" key="1">
    <source>
        <dbReference type="HAMAP-Rule" id="MF_00123"/>
    </source>
</evidence>
<reference key="1">
    <citation type="journal article" date="2005" name="Nat. Biotechnol.">
        <title>The complete genome sequence of the meat-borne lactic acid bacterium Lactobacillus sakei 23K.</title>
        <authorList>
            <person name="Chaillou S."/>
            <person name="Champomier-Verges M.-C."/>
            <person name="Cornet M."/>
            <person name="Crutz-Le Coq A.-M."/>
            <person name="Dudez A.-M."/>
            <person name="Martin V."/>
            <person name="Beaufils S."/>
            <person name="Darbon-Rongere E."/>
            <person name="Bossy R."/>
            <person name="Loux V."/>
            <person name="Zagorec M."/>
        </authorList>
    </citation>
    <scope>NUCLEOTIDE SEQUENCE [LARGE SCALE GENOMIC DNA]</scope>
    <source>
        <strain>23K</strain>
    </source>
</reference>
<keyword id="KW-0030">Aminoacyl-tRNA synthetase</keyword>
<keyword id="KW-0067">ATP-binding</keyword>
<keyword id="KW-0963">Cytoplasm</keyword>
<keyword id="KW-0436">Ligase</keyword>
<keyword id="KW-0547">Nucleotide-binding</keyword>
<keyword id="KW-0648">Protein biosynthesis</keyword>
<keyword id="KW-1185">Reference proteome</keyword>
<proteinExistence type="inferred from homology"/>
<feature type="chain" id="PRO_0000242036" description="Arginine--tRNA ligase">
    <location>
        <begin position="1"/>
        <end position="563"/>
    </location>
</feature>
<feature type="short sequence motif" description="'HIGH' region">
    <location>
        <begin position="122"/>
        <end position="132"/>
    </location>
</feature>
<accession>Q38VQ9</accession>
<gene>
    <name evidence="1" type="primary">argS</name>
    <name type="ordered locus">LCA_1421</name>
</gene>
<name>SYR_LATSS</name>
<sequence>MDFKQQVVTALTGVLGDSLPAEKVAQLIETPKTSDLGDYAFPTFILAKTLRKAPQQIAQDLVDQMDVAGFEKVIANGPYINFFLDKAAFSDQILKTVLTEAAKYGESDLGHGGNVPIDMSSPNIAKPISMGHLRSTVIGNSIAKILTKVGFNPIKINHLGDWGTQFGKLIVAYKKWGSEEEVKEDPITNLLKYYVKFHQEDVEHPELDDEARAWFRKLEAGDEEATQLWSWFRSESLKEFQKIYDMLGVEFDSYNGEAFYNDKMDAVVEAIESKGLLQESRGAEIVDLTAYNLNPALIKKSDGATLYMTRDLAAAMYRHDTYNFVQSLYVVGGEQREHFNQLKAVLKEMGNDWSDEIHHIPFGLITQGGKKLSTRSGRVILLEEVLNDAVKLAGAQIEAKNPDLPNREEVAKQVGIGAVIFHDLKNDRLDNFDFDLEEVVRFEGETGPYVQYTNARAQSILRKANQEVVVDDQLVVADDNAWDVLKMLSNFPAVIARASKEYEPSIVAKYALRLAKAFNKYYANSKILADDDQRNARLSLVKSVSIVLETALDLLGVQAPKEM</sequence>